<protein>
    <recommendedName>
        <fullName>Uncharacterized transmembrane protein DDB_G0292078</fullName>
    </recommendedName>
</protein>
<gene>
    <name type="ORF">DDB_G0292078</name>
</gene>
<evidence type="ECO:0000255" key="1"/>
<evidence type="ECO:0000305" key="2"/>
<accession>Q54DQ8</accession>
<sequence>MIFRSIFKKFSTEEEETKKKSVAKTNSFWFILISASSFLIYSLFHKKRLLGTATA</sequence>
<reference key="1">
    <citation type="journal article" date="2005" name="Nature">
        <title>The genome of the social amoeba Dictyostelium discoideum.</title>
        <authorList>
            <person name="Eichinger L."/>
            <person name="Pachebat J.A."/>
            <person name="Gloeckner G."/>
            <person name="Rajandream M.A."/>
            <person name="Sucgang R."/>
            <person name="Berriman M."/>
            <person name="Song J."/>
            <person name="Olsen R."/>
            <person name="Szafranski K."/>
            <person name="Xu Q."/>
            <person name="Tunggal B."/>
            <person name="Kummerfeld S."/>
            <person name="Madera M."/>
            <person name="Konfortov B.A."/>
            <person name="Rivero F."/>
            <person name="Bankier A.T."/>
            <person name="Lehmann R."/>
            <person name="Hamlin N."/>
            <person name="Davies R."/>
            <person name="Gaudet P."/>
            <person name="Fey P."/>
            <person name="Pilcher K."/>
            <person name="Chen G."/>
            <person name="Saunders D."/>
            <person name="Sodergren E.J."/>
            <person name="Davis P."/>
            <person name="Kerhornou A."/>
            <person name="Nie X."/>
            <person name="Hall N."/>
            <person name="Anjard C."/>
            <person name="Hemphill L."/>
            <person name="Bason N."/>
            <person name="Farbrother P."/>
            <person name="Desany B."/>
            <person name="Just E."/>
            <person name="Morio T."/>
            <person name="Rost R."/>
            <person name="Churcher C.M."/>
            <person name="Cooper J."/>
            <person name="Haydock S."/>
            <person name="van Driessche N."/>
            <person name="Cronin A."/>
            <person name="Goodhead I."/>
            <person name="Muzny D.M."/>
            <person name="Mourier T."/>
            <person name="Pain A."/>
            <person name="Lu M."/>
            <person name="Harper D."/>
            <person name="Lindsay R."/>
            <person name="Hauser H."/>
            <person name="James K.D."/>
            <person name="Quiles M."/>
            <person name="Madan Babu M."/>
            <person name="Saito T."/>
            <person name="Buchrieser C."/>
            <person name="Wardroper A."/>
            <person name="Felder M."/>
            <person name="Thangavelu M."/>
            <person name="Johnson D."/>
            <person name="Knights A."/>
            <person name="Loulseged H."/>
            <person name="Mungall K.L."/>
            <person name="Oliver K."/>
            <person name="Price C."/>
            <person name="Quail M.A."/>
            <person name="Urushihara H."/>
            <person name="Hernandez J."/>
            <person name="Rabbinowitsch E."/>
            <person name="Steffen D."/>
            <person name="Sanders M."/>
            <person name="Ma J."/>
            <person name="Kohara Y."/>
            <person name="Sharp S."/>
            <person name="Simmonds M.N."/>
            <person name="Spiegler S."/>
            <person name="Tivey A."/>
            <person name="Sugano S."/>
            <person name="White B."/>
            <person name="Walker D."/>
            <person name="Woodward J.R."/>
            <person name="Winckler T."/>
            <person name="Tanaka Y."/>
            <person name="Shaulsky G."/>
            <person name="Schleicher M."/>
            <person name="Weinstock G.M."/>
            <person name="Rosenthal A."/>
            <person name="Cox E.C."/>
            <person name="Chisholm R.L."/>
            <person name="Gibbs R.A."/>
            <person name="Loomis W.F."/>
            <person name="Platzer M."/>
            <person name="Kay R.R."/>
            <person name="Williams J.G."/>
            <person name="Dear P.H."/>
            <person name="Noegel A.A."/>
            <person name="Barrell B.G."/>
            <person name="Kuspa A."/>
        </authorList>
    </citation>
    <scope>NUCLEOTIDE SEQUENCE [LARGE SCALE GENOMIC DNA]</scope>
    <source>
        <strain>AX4</strain>
    </source>
</reference>
<proteinExistence type="predicted"/>
<name>Y4208_DICDI</name>
<comment type="subcellular location">
    <subcellularLocation>
        <location evidence="2">Membrane</location>
        <topology evidence="2">Single-pass membrane protein</topology>
    </subcellularLocation>
</comment>
<feature type="chain" id="PRO_0000344403" description="Uncharacterized transmembrane protein DDB_G0292078">
    <location>
        <begin position="1"/>
        <end position="55"/>
    </location>
</feature>
<feature type="transmembrane region" description="Helical" evidence="1">
    <location>
        <begin position="27"/>
        <end position="44"/>
    </location>
</feature>
<organism>
    <name type="scientific">Dictyostelium discoideum</name>
    <name type="common">Social amoeba</name>
    <dbReference type="NCBI Taxonomy" id="44689"/>
    <lineage>
        <taxon>Eukaryota</taxon>
        <taxon>Amoebozoa</taxon>
        <taxon>Evosea</taxon>
        <taxon>Eumycetozoa</taxon>
        <taxon>Dictyostelia</taxon>
        <taxon>Dictyosteliales</taxon>
        <taxon>Dictyosteliaceae</taxon>
        <taxon>Dictyostelium</taxon>
    </lineage>
</organism>
<keyword id="KW-0472">Membrane</keyword>
<keyword id="KW-1185">Reference proteome</keyword>
<keyword id="KW-0812">Transmembrane</keyword>
<keyword id="KW-1133">Transmembrane helix</keyword>
<dbReference type="EMBL" id="AAFI02000187">
    <property type="protein sequence ID" value="EAL61395.1"/>
    <property type="molecule type" value="Genomic_DNA"/>
</dbReference>
<dbReference type="RefSeq" id="XP_629814.1">
    <property type="nucleotide sequence ID" value="XM_629812.1"/>
</dbReference>
<dbReference type="SMR" id="Q54DQ8"/>
<dbReference type="FunCoup" id="Q54DQ8">
    <property type="interactions" value="131"/>
</dbReference>
<dbReference type="PaxDb" id="44689-DDB0184208"/>
<dbReference type="EnsemblProtists" id="EAL61395">
    <property type="protein sequence ID" value="EAL61395"/>
    <property type="gene ID" value="DDB_G0292078"/>
</dbReference>
<dbReference type="GeneID" id="8628495"/>
<dbReference type="KEGG" id="ddi:DDB_G0292078"/>
<dbReference type="dictyBase" id="DDB_G0292078"/>
<dbReference type="eggNOG" id="ENOG502RIJW">
    <property type="taxonomic scope" value="Eukaryota"/>
</dbReference>
<dbReference type="HOGENOM" id="CLU_3036392_0_0_1"/>
<dbReference type="InParanoid" id="Q54DQ8"/>
<dbReference type="OMA" id="AKTNSFW"/>
<dbReference type="PRO" id="PR:Q54DQ8"/>
<dbReference type="Proteomes" id="UP000002195">
    <property type="component" value="Chromosome 6"/>
</dbReference>
<dbReference type="GO" id="GO:0016020">
    <property type="term" value="C:membrane"/>
    <property type="evidence" value="ECO:0007669"/>
    <property type="project" value="UniProtKB-SubCell"/>
</dbReference>